<name>RLMC_YERPE</name>
<proteinExistence type="inferred from homology"/>
<keyword id="KW-0004">4Fe-4S</keyword>
<keyword id="KW-0408">Iron</keyword>
<keyword id="KW-0411">Iron-sulfur</keyword>
<keyword id="KW-0479">Metal-binding</keyword>
<keyword id="KW-0489">Methyltransferase</keyword>
<keyword id="KW-1185">Reference proteome</keyword>
<keyword id="KW-0698">rRNA processing</keyword>
<keyword id="KW-0949">S-adenosyl-L-methionine</keyword>
<keyword id="KW-0808">Transferase</keyword>
<feature type="chain" id="PRO_0000161941" description="23S rRNA (uracil(747)-C(5))-methyltransferase RlmC">
    <location>
        <begin position="1"/>
        <end position="376"/>
    </location>
</feature>
<feature type="active site" description="Nucleophile" evidence="1">
    <location>
        <position position="334"/>
    </location>
</feature>
<feature type="binding site" evidence="1">
    <location>
        <position position="3"/>
    </location>
    <ligand>
        <name>[4Fe-4S] cluster</name>
        <dbReference type="ChEBI" id="CHEBI:49883"/>
    </ligand>
</feature>
<feature type="binding site" evidence="1">
    <location>
        <position position="11"/>
    </location>
    <ligand>
        <name>[4Fe-4S] cluster</name>
        <dbReference type="ChEBI" id="CHEBI:49883"/>
    </ligand>
</feature>
<feature type="binding site" evidence="1">
    <location>
        <position position="14"/>
    </location>
    <ligand>
        <name>[4Fe-4S] cluster</name>
        <dbReference type="ChEBI" id="CHEBI:49883"/>
    </ligand>
</feature>
<feature type="binding site" evidence="1">
    <location>
        <position position="87"/>
    </location>
    <ligand>
        <name>[4Fe-4S] cluster</name>
        <dbReference type="ChEBI" id="CHEBI:49883"/>
    </ligand>
</feature>
<feature type="binding site" evidence="1">
    <location>
        <position position="212"/>
    </location>
    <ligand>
        <name>S-adenosyl-L-methionine</name>
        <dbReference type="ChEBI" id="CHEBI:59789"/>
    </ligand>
</feature>
<feature type="binding site" evidence="1">
    <location>
        <position position="241"/>
    </location>
    <ligand>
        <name>S-adenosyl-L-methionine</name>
        <dbReference type="ChEBI" id="CHEBI:59789"/>
    </ligand>
</feature>
<feature type="binding site" evidence="1">
    <location>
        <position position="262"/>
    </location>
    <ligand>
        <name>S-adenosyl-L-methionine</name>
        <dbReference type="ChEBI" id="CHEBI:59789"/>
    </ligand>
</feature>
<feature type="binding site" evidence="1">
    <location>
        <position position="307"/>
    </location>
    <ligand>
        <name>S-adenosyl-L-methionine</name>
        <dbReference type="ChEBI" id="CHEBI:59789"/>
    </ligand>
</feature>
<evidence type="ECO:0000255" key="1">
    <source>
        <dbReference type="HAMAP-Rule" id="MF_01012"/>
    </source>
</evidence>
<protein>
    <recommendedName>
        <fullName evidence="1">23S rRNA (uracil(747)-C(5))-methyltransferase RlmC</fullName>
        <ecNumber evidence="1">2.1.1.189</ecNumber>
    </recommendedName>
    <alternativeName>
        <fullName evidence="1">23S rRNA(m5U747)-methyltransferase</fullName>
    </alternativeName>
</protein>
<comment type="function">
    <text evidence="1">Catalyzes the formation of 5-methyl-uridine at position 747 (m5U747) in 23S rRNA.</text>
</comment>
<comment type="catalytic activity">
    <reaction evidence="1">
        <text>uridine(747) in 23S rRNA + S-adenosyl-L-methionine = 5-methyluridine(747) in 23S rRNA + S-adenosyl-L-homocysteine + H(+)</text>
        <dbReference type="Rhea" id="RHEA:42628"/>
        <dbReference type="Rhea" id="RHEA-COMP:10154"/>
        <dbReference type="Rhea" id="RHEA-COMP:10155"/>
        <dbReference type="ChEBI" id="CHEBI:15378"/>
        <dbReference type="ChEBI" id="CHEBI:57856"/>
        <dbReference type="ChEBI" id="CHEBI:59789"/>
        <dbReference type="ChEBI" id="CHEBI:65315"/>
        <dbReference type="ChEBI" id="CHEBI:74447"/>
        <dbReference type="EC" id="2.1.1.189"/>
    </reaction>
</comment>
<comment type="similarity">
    <text evidence="1">Belongs to the class I-like SAM-binding methyltransferase superfamily. RNA M5U methyltransferase family. RlmC subfamily.</text>
</comment>
<accession>Q8ZGG1</accession>
<accession>Q0WH77</accession>
<reference key="1">
    <citation type="journal article" date="2001" name="Nature">
        <title>Genome sequence of Yersinia pestis, the causative agent of plague.</title>
        <authorList>
            <person name="Parkhill J."/>
            <person name="Wren B.W."/>
            <person name="Thomson N.R."/>
            <person name="Titball R.W."/>
            <person name="Holden M.T.G."/>
            <person name="Prentice M.B."/>
            <person name="Sebaihia M."/>
            <person name="James K.D."/>
            <person name="Churcher C.M."/>
            <person name="Mungall K.L."/>
            <person name="Baker S."/>
            <person name="Basham D."/>
            <person name="Bentley S.D."/>
            <person name="Brooks K."/>
            <person name="Cerdeno-Tarraga A.-M."/>
            <person name="Chillingworth T."/>
            <person name="Cronin A."/>
            <person name="Davies R.M."/>
            <person name="Davis P."/>
            <person name="Dougan G."/>
            <person name="Feltwell T."/>
            <person name="Hamlin N."/>
            <person name="Holroyd S."/>
            <person name="Jagels K."/>
            <person name="Karlyshev A.V."/>
            <person name="Leather S."/>
            <person name="Moule S."/>
            <person name="Oyston P.C.F."/>
            <person name="Quail M.A."/>
            <person name="Rutherford K.M."/>
            <person name="Simmonds M."/>
            <person name="Skelton J."/>
            <person name="Stevens K."/>
            <person name="Whitehead S."/>
            <person name="Barrell B.G."/>
        </authorList>
    </citation>
    <scope>NUCLEOTIDE SEQUENCE [LARGE SCALE GENOMIC DNA]</scope>
    <source>
        <strain>CO-92 / Biovar Orientalis</strain>
    </source>
</reference>
<reference key="2">
    <citation type="journal article" date="2002" name="J. Bacteriol.">
        <title>Genome sequence of Yersinia pestis KIM.</title>
        <authorList>
            <person name="Deng W."/>
            <person name="Burland V."/>
            <person name="Plunkett G. III"/>
            <person name="Boutin A."/>
            <person name="Mayhew G.F."/>
            <person name="Liss P."/>
            <person name="Perna N.T."/>
            <person name="Rose D.J."/>
            <person name="Mau B."/>
            <person name="Zhou S."/>
            <person name="Schwartz D.C."/>
            <person name="Fetherston J.D."/>
            <person name="Lindler L.E."/>
            <person name="Brubaker R.R."/>
            <person name="Plano G.V."/>
            <person name="Straley S.C."/>
            <person name="McDonough K.A."/>
            <person name="Nilles M.L."/>
            <person name="Matson J.S."/>
            <person name="Blattner F.R."/>
            <person name="Perry R.D."/>
        </authorList>
    </citation>
    <scope>NUCLEOTIDE SEQUENCE [LARGE SCALE GENOMIC DNA]</scope>
    <source>
        <strain>KIM10+ / Biovar Mediaevalis</strain>
    </source>
</reference>
<reference key="3">
    <citation type="journal article" date="2004" name="DNA Res.">
        <title>Complete genome sequence of Yersinia pestis strain 91001, an isolate avirulent to humans.</title>
        <authorList>
            <person name="Song Y."/>
            <person name="Tong Z."/>
            <person name="Wang J."/>
            <person name="Wang L."/>
            <person name="Guo Z."/>
            <person name="Han Y."/>
            <person name="Zhang J."/>
            <person name="Pei D."/>
            <person name="Zhou D."/>
            <person name="Qin H."/>
            <person name="Pang X."/>
            <person name="Han Y."/>
            <person name="Zhai J."/>
            <person name="Li M."/>
            <person name="Cui B."/>
            <person name="Qi Z."/>
            <person name="Jin L."/>
            <person name="Dai R."/>
            <person name="Chen F."/>
            <person name="Li S."/>
            <person name="Ye C."/>
            <person name="Du Z."/>
            <person name="Lin W."/>
            <person name="Wang J."/>
            <person name="Yu J."/>
            <person name="Yang H."/>
            <person name="Wang J."/>
            <person name="Huang P."/>
            <person name="Yang R."/>
        </authorList>
    </citation>
    <scope>NUCLEOTIDE SEQUENCE [LARGE SCALE GENOMIC DNA]</scope>
    <source>
        <strain>91001 / Biovar Mediaevalis</strain>
    </source>
</reference>
<sequence length="376" mass="42202">MHCAQYTAGRCRSCQWLDKPYPQQLADKQHHLESLLAGHAVTQWLAPVFGRESAFRNKAKMVVSGSVERPLLGMLHRDGTPVDLCACPLYPPSFEPVFTVLKTFIARAGLTPYNVARKRGELKFLLLTESTYNGELMLRFVLRSETKLAQLIAALPWLQQQLPQLAVISANIQPVHMAILEGEREIPLTEQQALPERFNQVPLYIRPQSFFQTNPQVAASLYATARQWVQEHEVHSMWDLFCGVGGFGLHCAGPETQLTGIEINAEAIACARQSAEQLGLKNVSFAALDSTRFATAEAQIPELVLVNPPRRGIGRELCDYLSQMAPKFILYSSCNAETMAKDISLLAGYHIERVQLFDMFPHTSHYEVLTLLTLRR</sequence>
<organism>
    <name type="scientific">Yersinia pestis</name>
    <dbReference type="NCBI Taxonomy" id="632"/>
    <lineage>
        <taxon>Bacteria</taxon>
        <taxon>Pseudomonadati</taxon>
        <taxon>Pseudomonadota</taxon>
        <taxon>Gammaproteobacteria</taxon>
        <taxon>Enterobacterales</taxon>
        <taxon>Yersiniaceae</taxon>
        <taxon>Yersinia</taxon>
    </lineage>
</organism>
<gene>
    <name evidence="1" type="primary">rlmC</name>
    <name type="synonym">rumB</name>
    <name type="ordered locus">YPO1336</name>
    <name type="ordered locus">y2845</name>
    <name type="ordered locus">YP_1257</name>
</gene>
<dbReference type="EC" id="2.1.1.189" evidence="1"/>
<dbReference type="EMBL" id="AL590842">
    <property type="protein sequence ID" value="CAL19989.1"/>
    <property type="molecule type" value="Genomic_DNA"/>
</dbReference>
<dbReference type="EMBL" id="AE009952">
    <property type="protein sequence ID" value="AAM86396.1"/>
    <property type="molecule type" value="Genomic_DNA"/>
</dbReference>
<dbReference type="EMBL" id="AE017042">
    <property type="protein sequence ID" value="AAS61500.1"/>
    <property type="molecule type" value="Genomic_DNA"/>
</dbReference>
<dbReference type="PIR" id="AC0163">
    <property type="entry name" value="AC0163"/>
</dbReference>
<dbReference type="RefSeq" id="WP_002208756.1">
    <property type="nucleotide sequence ID" value="NZ_WUCM01000027.1"/>
</dbReference>
<dbReference type="RefSeq" id="YP_002346361.1">
    <property type="nucleotide sequence ID" value="NC_003143.1"/>
</dbReference>
<dbReference type="SMR" id="Q8ZGG1"/>
<dbReference type="STRING" id="214092.YPO1336"/>
<dbReference type="PaxDb" id="214092-YPO1336"/>
<dbReference type="DNASU" id="1147792"/>
<dbReference type="EnsemblBacteria" id="AAS61500">
    <property type="protein sequence ID" value="AAS61500"/>
    <property type="gene ID" value="YP_1257"/>
</dbReference>
<dbReference type="GeneID" id="57977467"/>
<dbReference type="KEGG" id="ype:YPO1336"/>
<dbReference type="KEGG" id="ypk:y2845"/>
<dbReference type="KEGG" id="ypm:YP_1257"/>
<dbReference type="PATRIC" id="fig|214092.21.peg.1651"/>
<dbReference type="eggNOG" id="COG2265">
    <property type="taxonomic scope" value="Bacteria"/>
</dbReference>
<dbReference type="HOGENOM" id="CLU_014689_0_0_6"/>
<dbReference type="OMA" id="SCQWLEK"/>
<dbReference type="OrthoDB" id="9804590at2"/>
<dbReference type="Proteomes" id="UP000000815">
    <property type="component" value="Chromosome"/>
</dbReference>
<dbReference type="Proteomes" id="UP000001019">
    <property type="component" value="Chromosome"/>
</dbReference>
<dbReference type="Proteomes" id="UP000002490">
    <property type="component" value="Chromosome"/>
</dbReference>
<dbReference type="GO" id="GO:0051539">
    <property type="term" value="F:4 iron, 4 sulfur cluster binding"/>
    <property type="evidence" value="ECO:0007669"/>
    <property type="project" value="UniProtKB-KW"/>
</dbReference>
<dbReference type="GO" id="GO:0005506">
    <property type="term" value="F:iron ion binding"/>
    <property type="evidence" value="ECO:0007669"/>
    <property type="project" value="UniProtKB-UniRule"/>
</dbReference>
<dbReference type="GO" id="GO:0070041">
    <property type="term" value="F:rRNA (uridine-C5-)-methyltransferase activity"/>
    <property type="evidence" value="ECO:0000318"/>
    <property type="project" value="GO_Central"/>
</dbReference>
<dbReference type="GO" id="GO:0070475">
    <property type="term" value="P:rRNA base methylation"/>
    <property type="evidence" value="ECO:0000318"/>
    <property type="project" value="GO_Central"/>
</dbReference>
<dbReference type="CDD" id="cd02440">
    <property type="entry name" value="AdoMet_MTases"/>
    <property type="match status" value="1"/>
</dbReference>
<dbReference type="FunFam" id="2.40.50.1070:FF:000002">
    <property type="entry name" value="23S rRNA (uracil(747)-C(5))-methyltransferase RlmC"/>
    <property type="match status" value="1"/>
</dbReference>
<dbReference type="Gene3D" id="2.40.50.1070">
    <property type="match status" value="1"/>
</dbReference>
<dbReference type="Gene3D" id="3.40.50.150">
    <property type="entry name" value="Vaccinia Virus protein VP39"/>
    <property type="match status" value="1"/>
</dbReference>
<dbReference type="HAMAP" id="MF_01012">
    <property type="entry name" value="23SrRNA_methyltr_RlmC"/>
    <property type="match status" value="1"/>
</dbReference>
<dbReference type="InterPro" id="IPR011825">
    <property type="entry name" value="23SrRNA_MeTrfase_RlmC"/>
</dbReference>
<dbReference type="InterPro" id="IPR030390">
    <property type="entry name" value="MeTrfase_TrmA_AS"/>
</dbReference>
<dbReference type="InterPro" id="IPR030391">
    <property type="entry name" value="MeTrfase_TrmA_CS"/>
</dbReference>
<dbReference type="InterPro" id="IPR029063">
    <property type="entry name" value="SAM-dependent_MTases_sf"/>
</dbReference>
<dbReference type="InterPro" id="IPR010280">
    <property type="entry name" value="U5_MeTrfase_fam"/>
</dbReference>
<dbReference type="NCBIfam" id="TIGR02085">
    <property type="entry name" value="meth_trns_rumB"/>
    <property type="match status" value="1"/>
</dbReference>
<dbReference type="NCBIfam" id="TIGR00479">
    <property type="entry name" value="rumA"/>
    <property type="match status" value="1"/>
</dbReference>
<dbReference type="PANTHER" id="PTHR11061">
    <property type="entry name" value="RNA M5U METHYLTRANSFERASE"/>
    <property type="match status" value="1"/>
</dbReference>
<dbReference type="PANTHER" id="PTHR11061:SF30">
    <property type="entry name" value="TRNA (URACIL(54)-C(5))-METHYLTRANSFERASE"/>
    <property type="match status" value="1"/>
</dbReference>
<dbReference type="Pfam" id="PF05958">
    <property type="entry name" value="tRNA_U5-meth_tr"/>
    <property type="match status" value="1"/>
</dbReference>
<dbReference type="SUPFAM" id="SSF53335">
    <property type="entry name" value="S-adenosyl-L-methionine-dependent methyltransferases"/>
    <property type="match status" value="1"/>
</dbReference>
<dbReference type="PROSITE" id="PS51687">
    <property type="entry name" value="SAM_MT_RNA_M5U"/>
    <property type="match status" value="1"/>
</dbReference>
<dbReference type="PROSITE" id="PS01230">
    <property type="entry name" value="TRMA_1"/>
    <property type="match status" value="1"/>
</dbReference>
<dbReference type="PROSITE" id="PS01231">
    <property type="entry name" value="TRMA_2"/>
    <property type="match status" value="1"/>
</dbReference>